<sequence>MIKIYDTMTRSLRDFVPLTENTVNMYVCGPTVYNYIHIGNARSTVAFDTIRRYFEYRGYTVNYISNFTDVDDKIIKAANEVGISTKELSDKFITAFMEDTAQLGIKPATQNPRVINYMDEIIAFVSILIDKGFAYVSEGDVYFRVTKSNNYAKLANKTLEDLEIGASGRTDAETDRKEDPLDFALWKAAKEGEISWESPWGPGRPGWHIECSVMATEILGDTIDIHGGGADLEFPHHTNEIAQSEAKTGKTFANYWMHNGFVNVDNEKMSKSLGNFVTVHDMLKTVDGQVLRFFLATQQYRKPINFTEKAIHDAEVNLKYLKNTHSLPLTEEVSQAELQAYLDAFQAAMDDDFNTANGVTVLFDMAKWINSGNYDETVKDAFEKILQVFGIVFEEETLDEDIEKLIEERQAARANKDFATADRIRDELAAQGIKLLDTKEGVRWTRD</sequence>
<gene>
    <name evidence="1" type="primary">cysS</name>
    <name type="ordered locus">stu0084</name>
</gene>
<protein>
    <recommendedName>
        <fullName evidence="1">Cysteine--tRNA ligase</fullName>
        <ecNumber evidence="1">6.1.1.16</ecNumber>
    </recommendedName>
    <alternativeName>
        <fullName evidence="1">Cysteinyl-tRNA synthetase</fullName>
        <shortName evidence="1">CysRS</shortName>
    </alternativeName>
</protein>
<evidence type="ECO:0000255" key="1">
    <source>
        <dbReference type="HAMAP-Rule" id="MF_00041"/>
    </source>
</evidence>
<dbReference type="EC" id="6.1.1.16" evidence="1"/>
<dbReference type="EMBL" id="CP000023">
    <property type="protein sequence ID" value="AAV59813.1"/>
    <property type="molecule type" value="Genomic_DNA"/>
</dbReference>
<dbReference type="RefSeq" id="WP_011225305.1">
    <property type="nucleotide sequence ID" value="NC_006448.1"/>
</dbReference>
<dbReference type="SMR" id="Q5M6F6"/>
<dbReference type="STRING" id="264199.stu0084"/>
<dbReference type="GeneID" id="66898014"/>
<dbReference type="KEGG" id="stl:stu0084"/>
<dbReference type="eggNOG" id="COG0215">
    <property type="taxonomic scope" value="Bacteria"/>
</dbReference>
<dbReference type="HOGENOM" id="CLU_013528_0_1_9"/>
<dbReference type="Proteomes" id="UP000001170">
    <property type="component" value="Chromosome"/>
</dbReference>
<dbReference type="GO" id="GO:0005829">
    <property type="term" value="C:cytosol"/>
    <property type="evidence" value="ECO:0007669"/>
    <property type="project" value="TreeGrafter"/>
</dbReference>
<dbReference type="GO" id="GO:0005524">
    <property type="term" value="F:ATP binding"/>
    <property type="evidence" value="ECO:0007669"/>
    <property type="project" value="UniProtKB-UniRule"/>
</dbReference>
<dbReference type="GO" id="GO:0004817">
    <property type="term" value="F:cysteine-tRNA ligase activity"/>
    <property type="evidence" value="ECO:0007669"/>
    <property type="project" value="UniProtKB-UniRule"/>
</dbReference>
<dbReference type="GO" id="GO:0008270">
    <property type="term" value="F:zinc ion binding"/>
    <property type="evidence" value="ECO:0007669"/>
    <property type="project" value="UniProtKB-UniRule"/>
</dbReference>
<dbReference type="GO" id="GO:0006423">
    <property type="term" value="P:cysteinyl-tRNA aminoacylation"/>
    <property type="evidence" value="ECO:0007669"/>
    <property type="project" value="UniProtKB-UniRule"/>
</dbReference>
<dbReference type="CDD" id="cd00672">
    <property type="entry name" value="CysRS_core"/>
    <property type="match status" value="1"/>
</dbReference>
<dbReference type="FunFam" id="3.40.50.620:FF:000130">
    <property type="entry name" value="Cysteine--tRNA ligase"/>
    <property type="match status" value="1"/>
</dbReference>
<dbReference type="Gene3D" id="1.20.120.640">
    <property type="entry name" value="Anticodon-binding domain of a subclass of class I aminoacyl-tRNA synthetases"/>
    <property type="match status" value="1"/>
</dbReference>
<dbReference type="Gene3D" id="3.40.50.620">
    <property type="entry name" value="HUPs"/>
    <property type="match status" value="1"/>
</dbReference>
<dbReference type="HAMAP" id="MF_00041">
    <property type="entry name" value="Cys_tRNA_synth"/>
    <property type="match status" value="1"/>
</dbReference>
<dbReference type="InterPro" id="IPR015803">
    <property type="entry name" value="Cys-tRNA-ligase"/>
</dbReference>
<dbReference type="InterPro" id="IPR015273">
    <property type="entry name" value="Cys-tRNA-synt_Ia_DALR"/>
</dbReference>
<dbReference type="InterPro" id="IPR024909">
    <property type="entry name" value="Cys-tRNA/MSH_ligase"/>
</dbReference>
<dbReference type="InterPro" id="IPR056411">
    <property type="entry name" value="CysS_C"/>
</dbReference>
<dbReference type="InterPro" id="IPR014729">
    <property type="entry name" value="Rossmann-like_a/b/a_fold"/>
</dbReference>
<dbReference type="InterPro" id="IPR032678">
    <property type="entry name" value="tRNA-synt_1_cat_dom"/>
</dbReference>
<dbReference type="InterPro" id="IPR009080">
    <property type="entry name" value="tRNAsynth_Ia_anticodon-bd"/>
</dbReference>
<dbReference type="NCBIfam" id="TIGR00435">
    <property type="entry name" value="cysS"/>
    <property type="match status" value="1"/>
</dbReference>
<dbReference type="PANTHER" id="PTHR10890:SF3">
    <property type="entry name" value="CYSTEINE--TRNA LIGASE, CYTOPLASMIC"/>
    <property type="match status" value="1"/>
</dbReference>
<dbReference type="PANTHER" id="PTHR10890">
    <property type="entry name" value="CYSTEINYL-TRNA SYNTHETASE"/>
    <property type="match status" value="1"/>
</dbReference>
<dbReference type="Pfam" id="PF23493">
    <property type="entry name" value="CysS_C"/>
    <property type="match status" value="1"/>
</dbReference>
<dbReference type="Pfam" id="PF09190">
    <property type="entry name" value="DALR_2"/>
    <property type="match status" value="1"/>
</dbReference>
<dbReference type="Pfam" id="PF01406">
    <property type="entry name" value="tRNA-synt_1e"/>
    <property type="match status" value="1"/>
</dbReference>
<dbReference type="PRINTS" id="PR00983">
    <property type="entry name" value="TRNASYNTHCYS"/>
</dbReference>
<dbReference type="SMART" id="SM00840">
    <property type="entry name" value="DALR_2"/>
    <property type="match status" value="1"/>
</dbReference>
<dbReference type="SUPFAM" id="SSF47323">
    <property type="entry name" value="Anticodon-binding domain of a subclass of class I aminoacyl-tRNA synthetases"/>
    <property type="match status" value="1"/>
</dbReference>
<dbReference type="SUPFAM" id="SSF52374">
    <property type="entry name" value="Nucleotidylyl transferase"/>
    <property type="match status" value="1"/>
</dbReference>
<organism>
    <name type="scientific">Streptococcus thermophilus (strain ATCC BAA-250 / LMG 18311)</name>
    <dbReference type="NCBI Taxonomy" id="264199"/>
    <lineage>
        <taxon>Bacteria</taxon>
        <taxon>Bacillati</taxon>
        <taxon>Bacillota</taxon>
        <taxon>Bacilli</taxon>
        <taxon>Lactobacillales</taxon>
        <taxon>Streptococcaceae</taxon>
        <taxon>Streptococcus</taxon>
    </lineage>
</organism>
<feature type="chain" id="PRO_0000159500" description="Cysteine--tRNA ligase">
    <location>
        <begin position="1"/>
        <end position="447"/>
    </location>
</feature>
<feature type="short sequence motif" description="'HIGH' region">
    <location>
        <begin position="30"/>
        <end position="40"/>
    </location>
</feature>
<feature type="short sequence motif" description="'KMSKS' region">
    <location>
        <begin position="268"/>
        <end position="272"/>
    </location>
</feature>
<feature type="binding site" evidence="1">
    <location>
        <position position="28"/>
    </location>
    <ligand>
        <name>Zn(2+)</name>
        <dbReference type="ChEBI" id="CHEBI:29105"/>
    </ligand>
</feature>
<feature type="binding site" evidence="1">
    <location>
        <position position="211"/>
    </location>
    <ligand>
        <name>Zn(2+)</name>
        <dbReference type="ChEBI" id="CHEBI:29105"/>
    </ligand>
</feature>
<feature type="binding site" evidence="1">
    <location>
        <position position="236"/>
    </location>
    <ligand>
        <name>Zn(2+)</name>
        <dbReference type="ChEBI" id="CHEBI:29105"/>
    </ligand>
</feature>
<feature type="binding site" evidence="1">
    <location>
        <position position="240"/>
    </location>
    <ligand>
        <name>Zn(2+)</name>
        <dbReference type="ChEBI" id="CHEBI:29105"/>
    </ligand>
</feature>
<feature type="binding site" evidence="1">
    <location>
        <position position="271"/>
    </location>
    <ligand>
        <name>ATP</name>
        <dbReference type="ChEBI" id="CHEBI:30616"/>
    </ligand>
</feature>
<reference key="1">
    <citation type="journal article" date="2004" name="Nat. Biotechnol.">
        <title>Complete sequence and comparative genome analysis of the dairy bacterium Streptococcus thermophilus.</title>
        <authorList>
            <person name="Bolotin A."/>
            <person name="Quinquis B."/>
            <person name="Renault P."/>
            <person name="Sorokin A."/>
            <person name="Ehrlich S.D."/>
            <person name="Kulakauskas S."/>
            <person name="Lapidus A."/>
            <person name="Goltsman E."/>
            <person name="Mazur M."/>
            <person name="Pusch G.D."/>
            <person name="Fonstein M."/>
            <person name="Overbeek R."/>
            <person name="Kyprides N."/>
            <person name="Purnelle B."/>
            <person name="Prozzi D."/>
            <person name="Ngui K."/>
            <person name="Masuy D."/>
            <person name="Hancy F."/>
            <person name="Burteau S."/>
            <person name="Boutry M."/>
            <person name="Delcour J."/>
            <person name="Goffeau A."/>
            <person name="Hols P."/>
        </authorList>
    </citation>
    <scope>NUCLEOTIDE SEQUENCE [LARGE SCALE GENOMIC DNA]</scope>
    <source>
        <strain>ATCC BAA-250 / LMG 18311</strain>
    </source>
</reference>
<name>SYC_STRT2</name>
<accession>Q5M6F6</accession>
<comment type="catalytic activity">
    <reaction evidence="1">
        <text>tRNA(Cys) + L-cysteine + ATP = L-cysteinyl-tRNA(Cys) + AMP + diphosphate</text>
        <dbReference type="Rhea" id="RHEA:17773"/>
        <dbReference type="Rhea" id="RHEA-COMP:9661"/>
        <dbReference type="Rhea" id="RHEA-COMP:9679"/>
        <dbReference type="ChEBI" id="CHEBI:30616"/>
        <dbReference type="ChEBI" id="CHEBI:33019"/>
        <dbReference type="ChEBI" id="CHEBI:35235"/>
        <dbReference type="ChEBI" id="CHEBI:78442"/>
        <dbReference type="ChEBI" id="CHEBI:78517"/>
        <dbReference type="ChEBI" id="CHEBI:456215"/>
        <dbReference type="EC" id="6.1.1.16"/>
    </reaction>
</comment>
<comment type="cofactor">
    <cofactor evidence="1">
        <name>Zn(2+)</name>
        <dbReference type="ChEBI" id="CHEBI:29105"/>
    </cofactor>
    <text evidence="1">Binds 1 zinc ion per subunit.</text>
</comment>
<comment type="subunit">
    <text evidence="1">Monomer.</text>
</comment>
<comment type="subcellular location">
    <subcellularLocation>
        <location evidence="1">Cytoplasm</location>
    </subcellularLocation>
</comment>
<comment type="similarity">
    <text evidence="1">Belongs to the class-I aminoacyl-tRNA synthetase family.</text>
</comment>
<proteinExistence type="inferred from homology"/>
<keyword id="KW-0030">Aminoacyl-tRNA synthetase</keyword>
<keyword id="KW-0067">ATP-binding</keyword>
<keyword id="KW-0963">Cytoplasm</keyword>
<keyword id="KW-0436">Ligase</keyword>
<keyword id="KW-0479">Metal-binding</keyword>
<keyword id="KW-0547">Nucleotide-binding</keyword>
<keyword id="KW-0648">Protein biosynthesis</keyword>
<keyword id="KW-1185">Reference proteome</keyword>
<keyword id="KW-0862">Zinc</keyword>